<comment type="function">
    <text evidence="1">Produces ATP from ADP in the presence of a proton gradient across the membrane.</text>
</comment>
<comment type="subunit">
    <text>F-type ATPases have 2 components, CF(1) - the catalytic core - and CF(0) - the membrane proton channel. CF(1) has five subunits: alpha(3), beta(3), gamma(1), delta(1), epsilon(1). CF(0) has three main subunits: a, b and c.</text>
</comment>
<comment type="subcellular location">
    <subcellularLocation>
        <location evidence="1">Cell inner membrane</location>
        <topology evidence="1">Peripheral membrane protein</topology>
    </subcellularLocation>
</comment>
<comment type="similarity">
    <text evidence="1">Belongs to the ATPase epsilon chain family.</text>
</comment>
<gene>
    <name evidence="1" type="primary">atpC</name>
    <name type="ordered locus">PM1495</name>
</gene>
<proteinExistence type="inferred from homology"/>
<dbReference type="EMBL" id="AE004439">
    <property type="protein sequence ID" value="AAK03579.1"/>
    <property type="molecule type" value="Genomic_DNA"/>
</dbReference>
<dbReference type="RefSeq" id="WP_005718055.1">
    <property type="nucleotide sequence ID" value="NC_002663.1"/>
</dbReference>
<dbReference type="SMR" id="Q9CKW0"/>
<dbReference type="STRING" id="272843.PM1495"/>
<dbReference type="EnsemblBacteria" id="AAK03579">
    <property type="protein sequence ID" value="AAK03579"/>
    <property type="gene ID" value="PM1495"/>
</dbReference>
<dbReference type="KEGG" id="pmu:PM1495"/>
<dbReference type="HOGENOM" id="CLU_084338_2_0_6"/>
<dbReference type="OrthoDB" id="9791445at2"/>
<dbReference type="Proteomes" id="UP000000809">
    <property type="component" value="Chromosome"/>
</dbReference>
<dbReference type="GO" id="GO:0005886">
    <property type="term" value="C:plasma membrane"/>
    <property type="evidence" value="ECO:0007669"/>
    <property type="project" value="UniProtKB-SubCell"/>
</dbReference>
<dbReference type="GO" id="GO:0045259">
    <property type="term" value="C:proton-transporting ATP synthase complex"/>
    <property type="evidence" value="ECO:0007669"/>
    <property type="project" value="UniProtKB-KW"/>
</dbReference>
<dbReference type="GO" id="GO:0005524">
    <property type="term" value="F:ATP binding"/>
    <property type="evidence" value="ECO:0007669"/>
    <property type="project" value="UniProtKB-UniRule"/>
</dbReference>
<dbReference type="GO" id="GO:0046933">
    <property type="term" value="F:proton-transporting ATP synthase activity, rotational mechanism"/>
    <property type="evidence" value="ECO:0007669"/>
    <property type="project" value="UniProtKB-UniRule"/>
</dbReference>
<dbReference type="CDD" id="cd12152">
    <property type="entry name" value="F1-ATPase_delta"/>
    <property type="match status" value="1"/>
</dbReference>
<dbReference type="FunFam" id="2.60.15.10:FF:000001">
    <property type="entry name" value="ATP synthase epsilon chain"/>
    <property type="match status" value="1"/>
</dbReference>
<dbReference type="Gene3D" id="1.20.5.440">
    <property type="entry name" value="ATP synthase delta/epsilon subunit, C-terminal domain"/>
    <property type="match status" value="1"/>
</dbReference>
<dbReference type="Gene3D" id="2.60.15.10">
    <property type="entry name" value="F0F1 ATP synthase delta/epsilon subunit, N-terminal"/>
    <property type="match status" value="1"/>
</dbReference>
<dbReference type="HAMAP" id="MF_00530">
    <property type="entry name" value="ATP_synth_epsil_bac"/>
    <property type="match status" value="1"/>
</dbReference>
<dbReference type="InterPro" id="IPR036794">
    <property type="entry name" value="ATP_F1_dsu/esu_C_sf"/>
</dbReference>
<dbReference type="InterPro" id="IPR001469">
    <property type="entry name" value="ATP_synth_F1_dsu/esu"/>
</dbReference>
<dbReference type="InterPro" id="IPR020546">
    <property type="entry name" value="ATP_synth_F1_dsu/esu_N"/>
</dbReference>
<dbReference type="InterPro" id="IPR036771">
    <property type="entry name" value="ATPsynth_dsu/esu_N"/>
</dbReference>
<dbReference type="NCBIfam" id="TIGR01216">
    <property type="entry name" value="ATP_synt_epsi"/>
    <property type="match status" value="1"/>
</dbReference>
<dbReference type="NCBIfam" id="NF001847">
    <property type="entry name" value="PRK00571.1-4"/>
    <property type="match status" value="1"/>
</dbReference>
<dbReference type="PANTHER" id="PTHR13822">
    <property type="entry name" value="ATP SYNTHASE DELTA/EPSILON CHAIN"/>
    <property type="match status" value="1"/>
</dbReference>
<dbReference type="PANTHER" id="PTHR13822:SF10">
    <property type="entry name" value="ATP SYNTHASE EPSILON CHAIN, CHLOROPLASTIC"/>
    <property type="match status" value="1"/>
</dbReference>
<dbReference type="Pfam" id="PF02823">
    <property type="entry name" value="ATP-synt_DE_N"/>
    <property type="match status" value="1"/>
</dbReference>
<dbReference type="SUPFAM" id="SSF46604">
    <property type="entry name" value="Epsilon subunit of F1F0-ATP synthase C-terminal domain"/>
    <property type="match status" value="1"/>
</dbReference>
<dbReference type="SUPFAM" id="SSF51344">
    <property type="entry name" value="Epsilon subunit of F1F0-ATP synthase N-terminal domain"/>
    <property type="match status" value="1"/>
</dbReference>
<reference key="1">
    <citation type="journal article" date="2001" name="Proc. Natl. Acad. Sci. U.S.A.">
        <title>Complete genomic sequence of Pasteurella multocida Pm70.</title>
        <authorList>
            <person name="May B.J."/>
            <person name="Zhang Q."/>
            <person name="Li L.L."/>
            <person name="Paustian M.L."/>
            <person name="Whittam T.S."/>
            <person name="Kapur V."/>
        </authorList>
    </citation>
    <scope>NUCLEOTIDE SEQUENCE [LARGE SCALE GENOMIC DNA]</scope>
    <source>
        <strain>Pm70</strain>
    </source>
</reference>
<keyword id="KW-0066">ATP synthesis</keyword>
<keyword id="KW-0997">Cell inner membrane</keyword>
<keyword id="KW-1003">Cell membrane</keyword>
<keyword id="KW-0139">CF(1)</keyword>
<keyword id="KW-0375">Hydrogen ion transport</keyword>
<keyword id="KW-0406">Ion transport</keyword>
<keyword id="KW-0472">Membrane</keyword>
<keyword id="KW-1185">Reference proteome</keyword>
<keyword id="KW-0813">Transport</keyword>
<evidence type="ECO:0000255" key="1">
    <source>
        <dbReference type="HAMAP-Rule" id="MF_00530"/>
    </source>
</evidence>
<feature type="chain" id="PRO_0000188172" description="ATP synthase epsilon chain">
    <location>
        <begin position="1"/>
        <end position="142"/>
    </location>
</feature>
<accession>Q9CKW0</accession>
<organism>
    <name type="scientific">Pasteurella multocida (strain Pm70)</name>
    <dbReference type="NCBI Taxonomy" id="272843"/>
    <lineage>
        <taxon>Bacteria</taxon>
        <taxon>Pseudomonadati</taxon>
        <taxon>Pseudomonadota</taxon>
        <taxon>Gammaproteobacteria</taxon>
        <taxon>Pasteurellales</taxon>
        <taxon>Pasteurellaceae</taxon>
        <taxon>Pasteurella</taxon>
    </lineage>
</organism>
<name>ATPE_PASMU</name>
<protein>
    <recommendedName>
        <fullName evidence="1">ATP synthase epsilon chain</fullName>
    </recommendedName>
    <alternativeName>
        <fullName evidence="1">ATP synthase F1 sector epsilon subunit</fullName>
    </alternativeName>
    <alternativeName>
        <fullName evidence="1">F-ATPase epsilon subunit</fullName>
    </alternativeName>
</protein>
<sequence>MSVFNLTVVSAEQQIFSGQVESIQATGIEGELGILAGHTPLLTAIKPGIVKLTLEDGKEEVIYVSGGFLEVQPNVVTVLADTAIRGDELDGDRILAAKKRAEENIRTRHGDANYEMLASKLSKELAKLRAYELTEKLVKNKR</sequence>